<name>LTMC_EPIFI</name>
<keyword id="KW-0325">Glycoprotein</keyword>
<keyword id="KW-0460">Magnesium</keyword>
<keyword id="KW-0479">Metal-binding</keyword>
<keyword id="KW-0808">Transferase</keyword>
<sequence>MTSGAWLVARPAAIEIAALLFAFTLGYLVKYTINYQSVVSQAIDHYGYGYERTSHEGIGGSNGKIPDCPYSYVISLYGHNHFSPLVDFLHPTLKHKYPKKHSLILDIMDAVHLCLIMVDDICDHSPKRKNHTTAHLLYGSCETANRAYFVLTKVINRAMKEQPVLGIELLRALELILEGQDMSLVWRRDGLRSFESYGEESLLTYKNMALLKTGTLFVLLGRLLNQGGHQSDDLLGRFGWYAQLQNDCKNIYSEEYAFNKGTVAEDLRNRELSFPVVVALNDKHTEPQIRKAFQSQNQGDIKRALQALESPSVKNTCLKTLQEAGQGLENLVAVWGRKEQMHFTK</sequence>
<accession>Q15FB2</accession>
<gene>
    <name evidence="7" type="primary">ltmC</name>
</gene>
<proteinExistence type="evidence at transcript level"/>
<dbReference type="EC" id="2.5.1.-" evidence="8"/>
<dbReference type="EMBL" id="DQ443465">
    <property type="protein sequence ID" value="ABF20225.1"/>
    <property type="molecule type" value="Genomic_DNA"/>
</dbReference>
<dbReference type="SMR" id="Q15FB2"/>
<dbReference type="GlyCosmos" id="Q15FB2">
    <property type="glycosylation" value="1 site, No reported glycans"/>
</dbReference>
<dbReference type="GO" id="GO:0046872">
    <property type="term" value="F:metal ion binding"/>
    <property type="evidence" value="ECO:0007669"/>
    <property type="project" value="UniProtKB-KW"/>
</dbReference>
<dbReference type="GO" id="GO:0004659">
    <property type="term" value="F:prenyltransferase activity"/>
    <property type="evidence" value="ECO:0007669"/>
    <property type="project" value="InterPro"/>
</dbReference>
<dbReference type="GO" id="GO:0046165">
    <property type="term" value="P:alcohol biosynthetic process"/>
    <property type="evidence" value="ECO:0007669"/>
    <property type="project" value="UniProtKB-ARBA"/>
</dbReference>
<dbReference type="GO" id="GO:0008299">
    <property type="term" value="P:isoprenoid biosynthetic process"/>
    <property type="evidence" value="ECO:0007669"/>
    <property type="project" value="InterPro"/>
</dbReference>
<dbReference type="GO" id="GO:0043386">
    <property type="term" value="P:mycotoxin biosynthetic process"/>
    <property type="evidence" value="ECO:0007669"/>
    <property type="project" value="UniProtKB-ARBA"/>
</dbReference>
<dbReference type="CDD" id="cd00867">
    <property type="entry name" value="Trans_IPPS"/>
    <property type="match status" value="1"/>
</dbReference>
<dbReference type="Gene3D" id="1.10.600.10">
    <property type="entry name" value="Farnesyl Diphosphate Synthase"/>
    <property type="match status" value="1"/>
</dbReference>
<dbReference type="InterPro" id="IPR008949">
    <property type="entry name" value="Isoprenoid_synthase_dom_sf"/>
</dbReference>
<dbReference type="InterPro" id="IPR000092">
    <property type="entry name" value="Polyprenyl_synt"/>
</dbReference>
<dbReference type="PANTHER" id="PTHR12001">
    <property type="entry name" value="GERANYLGERANYL PYROPHOSPHATE SYNTHASE"/>
    <property type="match status" value="1"/>
</dbReference>
<dbReference type="PANTHER" id="PTHR12001:SF72">
    <property type="entry name" value="THIJ_PFPI FAMILY PROTEIN (AFU_ORTHOLOGUE AFUA_3G01210)-RELATED"/>
    <property type="match status" value="1"/>
</dbReference>
<dbReference type="Pfam" id="PF00348">
    <property type="entry name" value="polyprenyl_synt"/>
    <property type="match status" value="1"/>
</dbReference>
<dbReference type="SUPFAM" id="SSF48576">
    <property type="entry name" value="Terpenoid synthases"/>
    <property type="match status" value="1"/>
</dbReference>
<reference key="1">
    <citation type="journal article" date="2006" name="Fungal Genet. Biol.">
        <title>A complex gene cluster for indole-diterpene biosynthesis in the grass endophyte Neotyphodium lolii.</title>
        <authorList>
            <person name="Young C.A."/>
            <person name="Felitti S."/>
            <person name="Shields K."/>
            <person name="Spangenberg G."/>
            <person name="Johnson R.D."/>
            <person name="Bryan G.T."/>
            <person name="Saikia S."/>
            <person name="Scott B."/>
        </authorList>
    </citation>
    <scope>NUCLEOTIDE SEQUENCE [GENOMIC DNA]</scope>
    <source>
        <strain>Lp19</strain>
    </source>
</reference>
<reference key="2">
    <citation type="journal article" date="2005" name="Mol. Genet. Genomics">
        <title>Molecular cloning and genetic analysis of a symbiosis-expressed gene cluster for lolitrem biosynthesis from a mutualistic endophyte of perennial ryegrass.</title>
        <authorList>
            <person name="Young C.A."/>
            <person name="Bryant M.K."/>
            <person name="Christensen M.J."/>
            <person name="Tapper B.A."/>
            <person name="Bryan G.T."/>
            <person name="Scott B."/>
        </authorList>
    </citation>
    <scope>FUNCTION</scope>
    <source>
        <strain>Lp19</strain>
    </source>
</reference>
<reference key="3">
    <citation type="journal article" date="2010" name="Plant Physiol.">
        <title>Disruption of signaling in a fungal-grass symbiosis leads to pathogenesis.</title>
        <authorList>
            <person name="Eaton C.J."/>
            <person name="Cox M.P."/>
            <person name="Ambrose B."/>
            <person name="Becker M."/>
            <person name="Hesse U."/>
            <person name="Schardl C.L."/>
            <person name="Scott B."/>
        </authorList>
    </citation>
    <scope>INDUCTION</scope>
</reference>
<reference key="4">
    <citation type="journal article" date="2012" name="FEBS Lett.">
        <title>Functional analysis of an indole-diterpene gene cluster for lolitrem B biosynthesis in the grass endosymbiont Epichloe festucae.</title>
        <authorList>
            <person name="Saikia S."/>
            <person name="Takemoto D."/>
            <person name="Tapper B.A."/>
            <person name="Lane G.A."/>
            <person name="Fraser K."/>
            <person name="Scott B."/>
        </authorList>
    </citation>
    <scope>FUNCTION</scope>
</reference>
<protein>
    <recommendedName>
        <fullName evidence="7">Prenyltransferase ltmC</fullName>
        <ecNumber evidence="8">2.5.1.-</ecNumber>
    </recommendedName>
    <alternativeName>
        <fullName evidence="7">Lolitrem B biosynthesis cluster 2 protein C</fullName>
    </alternativeName>
</protein>
<feature type="chain" id="PRO_0000444324" description="Prenyltransferase ltmC">
    <location>
        <begin position="1"/>
        <end position="345"/>
    </location>
</feature>
<feature type="binding site" evidence="1">
    <location>
        <position position="112"/>
    </location>
    <ligand>
        <name>substrate</name>
    </ligand>
</feature>
<feature type="binding site" evidence="1">
    <location>
        <position position="119"/>
    </location>
    <ligand>
        <name>Mg(2+)</name>
        <dbReference type="ChEBI" id="CHEBI:18420"/>
        <label>1</label>
    </ligand>
</feature>
<feature type="binding site" evidence="1">
    <location>
        <position position="119"/>
    </location>
    <ligand>
        <name>Mg(2+)</name>
        <dbReference type="ChEBI" id="CHEBI:18420"/>
        <label>2</label>
    </ligand>
</feature>
<feature type="binding site" evidence="1">
    <location>
        <position position="123"/>
    </location>
    <ligand>
        <name>Mg(2+)</name>
        <dbReference type="ChEBI" id="CHEBI:18420"/>
        <label>1</label>
    </ligand>
</feature>
<feature type="binding site" evidence="1">
    <location>
        <position position="123"/>
    </location>
    <ligand>
        <name>Mg(2+)</name>
        <dbReference type="ChEBI" id="CHEBI:18420"/>
        <label>2</label>
    </ligand>
</feature>
<feature type="binding site" evidence="1">
    <location>
        <position position="128"/>
    </location>
    <ligand>
        <name>substrate</name>
    </ligand>
</feature>
<feature type="binding site" evidence="1">
    <location>
        <position position="212"/>
    </location>
    <ligand>
        <name>substrate</name>
    </ligand>
</feature>
<feature type="binding site" evidence="1">
    <location>
        <position position="213"/>
    </location>
    <ligand>
        <name>substrate</name>
    </ligand>
</feature>
<feature type="binding site" evidence="1">
    <location>
        <position position="243"/>
    </location>
    <ligand>
        <name>substrate</name>
    </ligand>
</feature>
<feature type="binding site" evidence="1">
    <location>
        <position position="250"/>
    </location>
    <ligand>
        <name>substrate</name>
    </ligand>
</feature>
<feature type="binding site" evidence="1">
    <location>
        <position position="260"/>
    </location>
    <ligand>
        <name>substrate</name>
    </ligand>
</feature>
<feature type="glycosylation site" description="N-linked (GlcNAc...) asparagine" evidence="2">
    <location>
        <position position="130"/>
    </location>
</feature>
<evidence type="ECO:0000250" key="1">
    <source>
        <dbReference type="UniProtKB" id="Q12051"/>
    </source>
</evidence>
<evidence type="ECO:0000255" key="2">
    <source>
        <dbReference type="PROSITE-ProRule" id="PRU00498"/>
    </source>
</evidence>
<evidence type="ECO:0000269" key="3">
    <source>
    </source>
</evidence>
<evidence type="ECO:0000269" key="4">
    <source>
    </source>
</evidence>
<evidence type="ECO:0000269" key="5">
    <source>
    </source>
</evidence>
<evidence type="ECO:0000269" key="6">
    <source>
    </source>
</evidence>
<evidence type="ECO:0000303" key="7">
    <source>
    </source>
</evidence>
<evidence type="ECO:0000305" key="8"/>
<evidence type="ECO:0000305" key="9">
    <source>
    </source>
</evidence>
<comment type="function">
    <text evidence="3 4 6">Prenyltransferase; part of the gene cluster that mediates the biosynthesis of lolitrems, indole-diterpene mycotoxins that are potent tremorgens in mammals, and are synthesized by clavicipitaceous fungal endophytes in association with their grass hosts (PubMed:16765617). The geranylgeranyl diphosphate (GGPP) synthase ltmG is proposed to catalyze the first step in lolitrem biosynthesis (PubMed:15991026, PubMed:16765617). LtmG catalyzes a series of iterative condensations of isopentenyl diphosphate (IPP) with dimethylallyl diphosphate (DMAPP), geranyl diphosphate (GPP), and farnesyl diphosphate (FPP), to form GGPP (PubMed:15991026, PubMed:16765617). GGPP then condenses with indole-3-glycerol phosphate to form 3-geranylgeranylindole, an acyclic intermediate, to be incorporated into paxilline (PubMed:16765617). Either ltmG or ltmC could be responsible for this step, as both are putative prenyl transferases (PubMed:16765617). The FAD-dependent monooxygenase ltmM then catalyzes the epoxidation of the two terminal alkenes of the geranylgeranyl moiety, which is subsequently cyclized by ltmB, to paspaline (PubMed:15991026, PubMed:16765617). The cytochrome P450 monooxygenases ltmQ and ltmP can sequentially oxidize paspaline to terpendole E and terpendole F (PubMed:22750140). Alternatively, ltmP converts paspaline to an intermediate which is oxidized by ltmQ to terpendole F (PubMed:22750140). LtmF, ltmK, ltmE and ltmJ appear to be unique to the epichloe endophytes (PubMed:15991026, PubMed:16765617). The prenyltransferase ltmF is involved in the 27-hydroxyl-O-prenylation (PubMed:22750140). The cytochrome P450 monooxygenase ltmK is required for the oxidative acetal ring formation (PubMed:22750140). The multi-functional prenyltransferase ltmE is required for C20- and C21-prenylations of the indole ring of paspalanes and acts together with the cytochrome P450 monooxygenase ltmJ to yield lolitremanes by multiple oxidations and ring closures (PubMed:22750140). The stereoisomer pairs of lolitriol and lolitrem N or lolitrem B and lolitrem F may be attributed to variations in the way in which ring closure can occur under the action of ltmJ (PubMed:22750140). While the major product of this pathway is lolitrem B, the prenyl transferases and cytochrome P450 monooxygenases identified in this pathway have a remarkable versatility in their regio- and stereo-specificities to generate a diverse range of metabolites that are products of a metabolic grid rather than a linear pathway (PubMed:22750140).</text>
</comment>
<comment type="cofactor">
    <cofactor evidence="1">
        <name>Mg(2+)</name>
        <dbReference type="ChEBI" id="CHEBI:18420"/>
    </cofactor>
    <text evidence="1">Binds 3 Mg(2+) ions per subunit.</text>
</comment>
<comment type="pathway">
    <text evidence="9">Secondary metabolite biosynthesis.</text>
</comment>
<comment type="induction">
    <text evidence="5">Expression is down-regulated when the stress-activated mitogen-activated protein kinase (sakA) is deleted (PubMed:20519633).</text>
</comment>
<comment type="similarity">
    <text evidence="8">Belongs to the FPP/GGPP synthase family.</text>
</comment>
<organism>
    <name type="scientific">Epichloe festucae var. lolii</name>
    <name type="common">Neotyphodium lolii</name>
    <name type="synonym">Acremonium lolii</name>
    <dbReference type="NCBI Taxonomy" id="73839"/>
    <lineage>
        <taxon>Eukaryota</taxon>
        <taxon>Fungi</taxon>
        <taxon>Dikarya</taxon>
        <taxon>Ascomycota</taxon>
        <taxon>Pezizomycotina</taxon>
        <taxon>Sordariomycetes</taxon>
        <taxon>Hypocreomycetidae</taxon>
        <taxon>Hypocreales</taxon>
        <taxon>Clavicipitaceae</taxon>
        <taxon>Epichloe</taxon>
    </lineage>
</organism>